<accession>P77889</accession>
<accession>F9URH9</accession>
<gene>
    <name evidence="1" type="primary">pyrE</name>
    <name type="ordered locus">lp_2697</name>
</gene>
<name>PYRE_LACPL</name>
<keyword id="KW-0328">Glycosyltransferase</keyword>
<keyword id="KW-0460">Magnesium</keyword>
<keyword id="KW-0665">Pyrimidine biosynthesis</keyword>
<keyword id="KW-1185">Reference proteome</keyword>
<keyword id="KW-0808">Transferase</keyword>
<sequence>MSEIAATIATDLLTIKAVTLRPNDPFTWASGIKSPIYTDNRLTISYPAVRQHIAHGIAAIIKREYPATEVIAGVATAGIPHAAWVAELLNLPLIYVRAKPKDHGAGRQIEGVLKPGQKVVMLDDLISTGGSVLQAAKAVQAAGGDIQAVGAIFSYALDAATQNFAAASLPLFSLSNYPELIKVARQADYIDDEELASLHTWRQDPEHWGVTD</sequence>
<reference key="1">
    <citation type="journal article" date="1996" name="Gene">
        <title>Structure and organisation of the pyrimidine biosynthesis pathway genes in Lactobacillus plantarum: a PCR strategy for sequencing without cloning.</title>
        <authorList>
            <person name="Elagoez A."/>
            <person name="Abdi A."/>
            <person name="Hubert J.-C."/>
            <person name="Kammerer B."/>
        </authorList>
    </citation>
    <scope>NUCLEOTIDE SEQUENCE [GENOMIC DNA]</scope>
    <source>
        <strain>ATCC 8014 / CCM 1904 / DSM 20205 / NCDO 82 / NCIB 6376</strain>
    </source>
</reference>
<reference key="2">
    <citation type="journal article" date="2003" name="Proc. Natl. Acad. Sci. U.S.A.">
        <title>Complete genome sequence of Lactobacillus plantarum WCFS1.</title>
        <authorList>
            <person name="Kleerebezem M."/>
            <person name="Boekhorst J."/>
            <person name="van Kranenburg R."/>
            <person name="Molenaar D."/>
            <person name="Kuipers O.P."/>
            <person name="Leer R."/>
            <person name="Tarchini R."/>
            <person name="Peters S.A."/>
            <person name="Sandbrink H.M."/>
            <person name="Fiers M.W.E.J."/>
            <person name="Stiekema W."/>
            <person name="Klein Lankhorst R.M."/>
            <person name="Bron P.A."/>
            <person name="Hoffer S.M."/>
            <person name="Nierop Groot M.N."/>
            <person name="Kerkhoven R."/>
            <person name="De Vries M."/>
            <person name="Ursing B."/>
            <person name="De Vos W.M."/>
            <person name="Siezen R.J."/>
        </authorList>
    </citation>
    <scope>NUCLEOTIDE SEQUENCE [LARGE SCALE GENOMIC DNA]</scope>
    <source>
        <strain>ATCC BAA-793 / NCIMB 8826 / WCFS1</strain>
    </source>
</reference>
<reference key="3">
    <citation type="journal article" date="2012" name="J. Bacteriol.">
        <title>Complete resequencing and reannotation of the Lactobacillus plantarum WCFS1 genome.</title>
        <authorList>
            <person name="Siezen R.J."/>
            <person name="Francke C."/>
            <person name="Renckens B."/>
            <person name="Boekhorst J."/>
            <person name="Wels M."/>
            <person name="Kleerebezem M."/>
            <person name="van Hijum S.A."/>
        </authorList>
    </citation>
    <scope>NUCLEOTIDE SEQUENCE [LARGE SCALE GENOMIC DNA]</scope>
    <scope>GENOME REANNOTATION</scope>
    <source>
        <strain>ATCC BAA-793 / NCIMB 8826 / WCFS1</strain>
    </source>
</reference>
<organism>
    <name type="scientific">Lactiplantibacillus plantarum (strain ATCC BAA-793 / NCIMB 8826 / WCFS1)</name>
    <name type="common">Lactobacillus plantarum</name>
    <dbReference type="NCBI Taxonomy" id="220668"/>
    <lineage>
        <taxon>Bacteria</taxon>
        <taxon>Bacillati</taxon>
        <taxon>Bacillota</taxon>
        <taxon>Bacilli</taxon>
        <taxon>Lactobacillales</taxon>
        <taxon>Lactobacillaceae</taxon>
        <taxon>Lactiplantibacillus</taxon>
    </lineage>
</organism>
<evidence type="ECO:0000255" key="1">
    <source>
        <dbReference type="HAMAP-Rule" id="MF_01208"/>
    </source>
</evidence>
<comment type="function">
    <text evidence="1">Catalyzes the transfer of a ribosyl phosphate group from 5-phosphoribose 1-diphosphate to orotate, leading to the formation of orotidine monophosphate (OMP).</text>
</comment>
<comment type="catalytic activity">
    <reaction evidence="1">
        <text>orotidine 5'-phosphate + diphosphate = orotate + 5-phospho-alpha-D-ribose 1-diphosphate</text>
        <dbReference type="Rhea" id="RHEA:10380"/>
        <dbReference type="ChEBI" id="CHEBI:30839"/>
        <dbReference type="ChEBI" id="CHEBI:33019"/>
        <dbReference type="ChEBI" id="CHEBI:57538"/>
        <dbReference type="ChEBI" id="CHEBI:58017"/>
        <dbReference type="EC" id="2.4.2.10"/>
    </reaction>
</comment>
<comment type="cofactor">
    <cofactor evidence="1">
        <name>Mg(2+)</name>
        <dbReference type="ChEBI" id="CHEBI:18420"/>
    </cofactor>
</comment>
<comment type="pathway">
    <text evidence="1">Pyrimidine metabolism; UMP biosynthesis via de novo pathway; UMP from orotate: step 1/2.</text>
</comment>
<comment type="subunit">
    <text evidence="1">Homodimer.</text>
</comment>
<comment type="similarity">
    <text evidence="1">Belongs to the purine/pyrimidine phosphoribosyltransferase family. PyrE subfamily.</text>
</comment>
<dbReference type="EC" id="2.4.2.10" evidence="1"/>
<dbReference type="EMBL" id="Z54240">
    <property type="protein sequence ID" value="CAA91008.1"/>
    <property type="molecule type" value="Genomic_DNA"/>
</dbReference>
<dbReference type="EMBL" id="AL935263">
    <property type="protein sequence ID" value="CCC79818.1"/>
    <property type="molecule type" value="Genomic_DNA"/>
</dbReference>
<dbReference type="PIR" id="A60993">
    <property type="entry name" value="A60993"/>
</dbReference>
<dbReference type="RefSeq" id="WP_011101885.1">
    <property type="nucleotide sequence ID" value="NC_004567.2"/>
</dbReference>
<dbReference type="RefSeq" id="YP_004890332.1">
    <property type="nucleotide sequence ID" value="NC_004567.2"/>
</dbReference>
<dbReference type="SMR" id="P77889"/>
<dbReference type="STRING" id="220668.lp_2697"/>
<dbReference type="EnsemblBacteria" id="CCC79818">
    <property type="protein sequence ID" value="CCC79818"/>
    <property type="gene ID" value="lp_2697"/>
</dbReference>
<dbReference type="GeneID" id="89669933"/>
<dbReference type="KEGG" id="lpl:lp_2697"/>
<dbReference type="PATRIC" id="fig|220668.9.peg.2257"/>
<dbReference type="eggNOG" id="COG0461">
    <property type="taxonomic scope" value="Bacteria"/>
</dbReference>
<dbReference type="HOGENOM" id="CLU_074878_1_1_9"/>
<dbReference type="OrthoDB" id="9802134at2"/>
<dbReference type="PhylomeDB" id="P77889"/>
<dbReference type="UniPathway" id="UPA00070">
    <property type="reaction ID" value="UER00119"/>
</dbReference>
<dbReference type="Proteomes" id="UP000000432">
    <property type="component" value="Chromosome"/>
</dbReference>
<dbReference type="GO" id="GO:0000287">
    <property type="term" value="F:magnesium ion binding"/>
    <property type="evidence" value="ECO:0007669"/>
    <property type="project" value="UniProtKB-UniRule"/>
</dbReference>
<dbReference type="GO" id="GO:0004588">
    <property type="term" value="F:orotate phosphoribosyltransferase activity"/>
    <property type="evidence" value="ECO:0007669"/>
    <property type="project" value="UniProtKB-UniRule"/>
</dbReference>
<dbReference type="GO" id="GO:0044205">
    <property type="term" value="P:'de novo' UMP biosynthetic process"/>
    <property type="evidence" value="ECO:0007669"/>
    <property type="project" value="UniProtKB-UniRule"/>
</dbReference>
<dbReference type="GO" id="GO:0019856">
    <property type="term" value="P:pyrimidine nucleobase biosynthetic process"/>
    <property type="evidence" value="ECO:0007669"/>
    <property type="project" value="TreeGrafter"/>
</dbReference>
<dbReference type="CDD" id="cd06223">
    <property type="entry name" value="PRTases_typeI"/>
    <property type="match status" value="1"/>
</dbReference>
<dbReference type="Gene3D" id="3.40.50.2020">
    <property type="match status" value="1"/>
</dbReference>
<dbReference type="HAMAP" id="MF_01208">
    <property type="entry name" value="PyrE"/>
    <property type="match status" value="1"/>
</dbReference>
<dbReference type="InterPro" id="IPR023031">
    <property type="entry name" value="OPRT"/>
</dbReference>
<dbReference type="InterPro" id="IPR004467">
    <property type="entry name" value="Or_phspho_trans_dom"/>
</dbReference>
<dbReference type="InterPro" id="IPR000836">
    <property type="entry name" value="PRibTrfase_dom"/>
</dbReference>
<dbReference type="InterPro" id="IPR029057">
    <property type="entry name" value="PRTase-like"/>
</dbReference>
<dbReference type="NCBIfam" id="TIGR00336">
    <property type="entry name" value="pyrE"/>
    <property type="match status" value="1"/>
</dbReference>
<dbReference type="PANTHER" id="PTHR19278">
    <property type="entry name" value="OROTATE PHOSPHORIBOSYLTRANSFERASE"/>
    <property type="match status" value="1"/>
</dbReference>
<dbReference type="PANTHER" id="PTHR19278:SF9">
    <property type="entry name" value="URIDINE 5'-MONOPHOSPHATE SYNTHASE"/>
    <property type="match status" value="1"/>
</dbReference>
<dbReference type="Pfam" id="PF00156">
    <property type="entry name" value="Pribosyltran"/>
    <property type="match status" value="1"/>
</dbReference>
<dbReference type="SUPFAM" id="SSF53271">
    <property type="entry name" value="PRTase-like"/>
    <property type="match status" value="1"/>
</dbReference>
<dbReference type="PROSITE" id="PS00103">
    <property type="entry name" value="PUR_PYR_PR_TRANSFER"/>
    <property type="match status" value="1"/>
</dbReference>
<feature type="chain" id="PRO_0000110705" description="Orotate phosphoribosyltransferase">
    <location>
        <begin position="1"/>
        <end position="212"/>
    </location>
</feature>
<feature type="binding site" evidence="1">
    <location>
        <position position="97"/>
    </location>
    <ligand>
        <name>5-phospho-alpha-D-ribose 1-diphosphate</name>
        <dbReference type="ChEBI" id="CHEBI:58017"/>
        <note>ligand shared between dimeric partners</note>
    </ligand>
</feature>
<feature type="binding site" evidence="1">
    <location>
        <position position="101"/>
    </location>
    <ligand>
        <name>5-phospho-alpha-D-ribose 1-diphosphate</name>
        <dbReference type="ChEBI" id="CHEBI:58017"/>
        <note>ligand shared between dimeric partners</note>
    </ligand>
</feature>
<feature type="binding site" evidence="1">
    <location>
        <position position="103"/>
    </location>
    <ligand>
        <name>5-phospho-alpha-D-ribose 1-diphosphate</name>
        <dbReference type="ChEBI" id="CHEBI:58017"/>
        <note>ligand shared between dimeric partners</note>
    </ligand>
</feature>
<feature type="binding site" description="in other chain" evidence="1">
    <location>
        <begin position="123"/>
        <end position="131"/>
    </location>
    <ligand>
        <name>5-phospho-alpha-D-ribose 1-diphosphate</name>
        <dbReference type="ChEBI" id="CHEBI:58017"/>
        <note>ligand shared between dimeric partners</note>
    </ligand>
</feature>
<feature type="binding site" evidence="1">
    <location>
        <position position="127"/>
    </location>
    <ligand>
        <name>orotate</name>
        <dbReference type="ChEBI" id="CHEBI:30839"/>
    </ligand>
</feature>
<proteinExistence type="inferred from homology"/>
<protein>
    <recommendedName>
        <fullName evidence="1">Orotate phosphoribosyltransferase</fullName>
        <shortName evidence="1">OPRT</shortName>
        <shortName evidence="1">OPRTase</shortName>
        <ecNumber evidence="1">2.4.2.10</ecNumber>
    </recommendedName>
</protein>